<sequence length="373" mass="40474">MTSNQQRVVVKVGSSSLTSLHGEISSKKLEKLVEQIVRLKDEGHEVLLVSSGAVAAGYRKLGFINRPDTLPEKQASASVGQGLLIEAYSKLFLSHGYIASQILITKSDFSDEKRYNNVRNTMNVLLKRGIIPIINENDTVTVNRLKFGDNDTLSAKVAGLIDADLLTILSDIDGLYDANPRKTPDAALVQEVTEITPEIEASAGDAGSEVGTGGMKSKLDAFKITMASGIKGFLGRADTPGILHEAICGTARGTYFIPNADSHALNHKKQWIAFNSGPEGDIVVHNESKEFIIDRKKSLYPSSIYDINGRFSNGSVVRILDQEGEEIGLGVVNFSSSQLRKWKKDTNQETAASSQAVVDREAFVCHLELSVPL</sequence>
<dbReference type="EC" id="2.7.2.11" evidence="1"/>
<dbReference type="EMBL" id="AE017333">
    <property type="protein sequence ID" value="AAU41036.1"/>
    <property type="molecule type" value="Genomic_DNA"/>
</dbReference>
<dbReference type="EMBL" id="CP000002">
    <property type="protein sequence ID" value="AAU23674.1"/>
    <property type="molecule type" value="Genomic_DNA"/>
</dbReference>
<dbReference type="SMR" id="Q65IS8"/>
<dbReference type="STRING" id="279010.BL01983"/>
<dbReference type="KEGG" id="bld:BLi02149"/>
<dbReference type="KEGG" id="bli:BL01983"/>
<dbReference type="eggNOG" id="COG0263">
    <property type="taxonomic scope" value="Bacteria"/>
</dbReference>
<dbReference type="HOGENOM" id="CLU_025400_2_0_9"/>
<dbReference type="UniPathway" id="UPA00098">
    <property type="reaction ID" value="UER00359"/>
</dbReference>
<dbReference type="Proteomes" id="UP000000606">
    <property type="component" value="Chromosome"/>
</dbReference>
<dbReference type="GO" id="GO:0005829">
    <property type="term" value="C:cytosol"/>
    <property type="evidence" value="ECO:0007669"/>
    <property type="project" value="TreeGrafter"/>
</dbReference>
<dbReference type="GO" id="GO:0005524">
    <property type="term" value="F:ATP binding"/>
    <property type="evidence" value="ECO:0007669"/>
    <property type="project" value="UniProtKB-KW"/>
</dbReference>
<dbReference type="GO" id="GO:0004349">
    <property type="term" value="F:glutamate 5-kinase activity"/>
    <property type="evidence" value="ECO:0007669"/>
    <property type="project" value="UniProtKB-UniRule"/>
</dbReference>
<dbReference type="GO" id="GO:0003723">
    <property type="term" value="F:RNA binding"/>
    <property type="evidence" value="ECO:0007669"/>
    <property type="project" value="InterPro"/>
</dbReference>
<dbReference type="GO" id="GO:0055129">
    <property type="term" value="P:L-proline biosynthetic process"/>
    <property type="evidence" value="ECO:0007669"/>
    <property type="project" value="UniProtKB-UniRule"/>
</dbReference>
<dbReference type="CDD" id="cd04242">
    <property type="entry name" value="AAK_G5K_ProB"/>
    <property type="match status" value="1"/>
</dbReference>
<dbReference type="CDD" id="cd21157">
    <property type="entry name" value="PUA_G5K"/>
    <property type="match status" value="1"/>
</dbReference>
<dbReference type="FunFam" id="3.40.1160.10:FF:000018">
    <property type="entry name" value="Glutamate 5-kinase"/>
    <property type="match status" value="1"/>
</dbReference>
<dbReference type="Gene3D" id="3.40.1160.10">
    <property type="entry name" value="Acetylglutamate kinase-like"/>
    <property type="match status" value="1"/>
</dbReference>
<dbReference type="Gene3D" id="2.30.130.10">
    <property type="entry name" value="PUA domain"/>
    <property type="match status" value="1"/>
</dbReference>
<dbReference type="HAMAP" id="MF_00456">
    <property type="entry name" value="ProB"/>
    <property type="match status" value="1"/>
</dbReference>
<dbReference type="InterPro" id="IPR036393">
    <property type="entry name" value="AceGlu_kinase-like_sf"/>
</dbReference>
<dbReference type="InterPro" id="IPR001048">
    <property type="entry name" value="Asp/Glu/Uridylate_kinase"/>
</dbReference>
<dbReference type="InterPro" id="IPR041739">
    <property type="entry name" value="G5K_ProB"/>
</dbReference>
<dbReference type="InterPro" id="IPR001057">
    <property type="entry name" value="Glu/AcGlu_kinase"/>
</dbReference>
<dbReference type="InterPro" id="IPR011529">
    <property type="entry name" value="Glu_5kinase"/>
</dbReference>
<dbReference type="InterPro" id="IPR005715">
    <property type="entry name" value="Glu_5kinase/COase_Synthase"/>
</dbReference>
<dbReference type="InterPro" id="IPR002478">
    <property type="entry name" value="PUA"/>
</dbReference>
<dbReference type="InterPro" id="IPR015947">
    <property type="entry name" value="PUA-like_sf"/>
</dbReference>
<dbReference type="InterPro" id="IPR036974">
    <property type="entry name" value="PUA_sf"/>
</dbReference>
<dbReference type="NCBIfam" id="TIGR01027">
    <property type="entry name" value="proB"/>
    <property type="match status" value="1"/>
</dbReference>
<dbReference type="PANTHER" id="PTHR43654">
    <property type="entry name" value="GLUTAMATE 5-KINASE"/>
    <property type="match status" value="1"/>
</dbReference>
<dbReference type="PANTHER" id="PTHR43654:SF1">
    <property type="entry name" value="ISOPENTENYL PHOSPHATE KINASE"/>
    <property type="match status" value="1"/>
</dbReference>
<dbReference type="Pfam" id="PF00696">
    <property type="entry name" value="AA_kinase"/>
    <property type="match status" value="1"/>
</dbReference>
<dbReference type="Pfam" id="PF01472">
    <property type="entry name" value="PUA"/>
    <property type="match status" value="1"/>
</dbReference>
<dbReference type="PIRSF" id="PIRSF000729">
    <property type="entry name" value="GK"/>
    <property type="match status" value="1"/>
</dbReference>
<dbReference type="PRINTS" id="PR00474">
    <property type="entry name" value="GLU5KINASE"/>
</dbReference>
<dbReference type="SMART" id="SM00359">
    <property type="entry name" value="PUA"/>
    <property type="match status" value="1"/>
</dbReference>
<dbReference type="SUPFAM" id="SSF53633">
    <property type="entry name" value="Carbamate kinase-like"/>
    <property type="match status" value="1"/>
</dbReference>
<dbReference type="SUPFAM" id="SSF88697">
    <property type="entry name" value="PUA domain-like"/>
    <property type="match status" value="1"/>
</dbReference>
<dbReference type="PROSITE" id="PS50890">
    <property type="entry name" value="PUA"/>
    <property type="match status" value="1"/>
</dbReference>
<name>PROB2_BACLD</name>
<reference key="1">
    <citation type="journal article" date="2004" name="J. Mol. Microbiol. Biotechnol.">
        <title>The complete genome sequence of Bacillus licheniformis DSM13, an organism with great industrial potential.</title>
        <authorList>
            <person name="Veith B."/>
            <person name="Herzberg C."/>
            <person name="Steckel S."/>
            <person name="Feesche J."/>
            <person name="Maurer K.H."/>
            <person name="Ehrenreich P."/>
            <person name="Baeumer S."/>
            <person name="Henne A."/>
            <person name="Liesegang H."/>
            <person name="Merkl R."/>
            <person name="Ehrenreich A."/>
            <person name="Gottschalk G."/>
        </authorList>
    </citation>
    <scope>NUCLEOTIDE SEQUENCE [LARGE SCALE GENOMIC DNA]</scope>
    <source>
        <strain>ATCC 14580 / DSM 13 / JCM 2505 / CCUG 7422 / NBRC 12200 / NCIMB 9375 / NCTC 10341 / NRRL NRS-1264 / Gibson 46</strain>
    </source>
</reference>
<reference key="2">
    <citation type="journal article" date="2004" name="Genome Biol.">
        <title>Complete genome sequence of the industrial bacterium Bacillus licheniformis and comparisons with closely related Bacillus species.</title>
        <authorList>
            <person name="Rey M.W."/>
            <person name="Ramaiya P."/>
            <person name="Nelson B.A."/>
            <person name="Brody-Karpin S.D."/>
            <person name="Zaretsky E.J."/>
            <person name="Tang M."/>
            <person name="Lopez de Leon A."/>
            <person name="Xiang H."/>
            <person name="Gusti V."/>
            <person name="Clausen I.G."/>
            <person name="Olsen P.B."/>
            <person name="Rasmussen M.D."/>
            <person name="Andersen J.T."/>
            <person name="Joergensen P.L."/>
            <person name="Larsen T.S."/>
            <person name="Sorokin A."/>
            <person name="Bolotin A."/>
            <person name="Lapidus A."/>
            <person name="Galleron N."/>
            <person name="Ehrlich S.D."/>
            <person name="Berka R.M."/>
        </authorList>
    </citation>
    <scope>NUCLEOTIDE SEQUENCE [LARGE SCALE GENOMIC DNA]</scope>
    <source>
        <strain>ATCC 14580 / DSM 13 / JCM 2505 / CCUG 7422 / NBRC 12200 / NCIMB 9375 / NCTC 10341 / NRRL NRS-1264 / Gibson 46</strain>
    </source>
</reference>
<accession>Q65IS8</accession>
<accession>Q62U85</accession>
<organism>
    <name type="scientific">Bacillus licheniformis (strain ATCC 14580 / DSM 13 / JCM 2505 / CCUG 7422 / NBRC 12200 / NCIMB 9375 / NCTC 10341 / NRRL NRS-1264 / Gibson 46)</name>
    <dbReference type="NCBI Taxonomy" id="279010"/>
    <lineage>
        <taxon>Bacteria</taxon>
        <taxon>Bacillati</taxon>
        <taxon>Bacillota</taxon>
        <taxon>Bacilli</taxon>
        <taxon>Bacillales</taxon>
        <taxon>Bacillaceae</taxon>
        <taxon>Bacillus</taxon>
    </lineage>
</organism>
<keyword id="KW-0028">Amino-acid biosynthesis</keyword>
<keyword id="KW-0067">ATP-binding</keyword>
<keyword id="KW-0963">Cytoplasm</keyword>
<keyword id="KW-0418">Kinase</keyword>
<keyword id="KW-0547">Nucleotide-binding</keyword>
<keyword id="KW-0641">Proline biosynthesis</keyword>
<keyword id="KW-1185">Reference proteome</keyword>
<keyword id="KW-0808">Transferase</keyword>
<comment type="function">
    <text evidence="1">Catalyzes the transfer of a phosphate group to glutamate to form L-glutamate 5-phosphate.</text>
</comment>
<comment type="catalytic activity">
    <reaction evidence="1">
        <text>L-glutamate + ATP = L-glutamyl 5-phosphate + ADP</text>
        <dbReference type="Rhea" id="RHEA:14877"/>
        <dbReference type="ChEBI" id="CHEBI:29985"/>
        <dbReference type="ChEBI" id="CHEBI:30616"/>
        <dbReference type="ChEBI" id="CHEBI:58274"/>
        <dbReference type="ChEBI" id="CHEBI:456216"/>
        <dbReference type="EC" id="2.7.2.11"/>
    </reaction>
</comment>
<comment type="pathway">
    <text evidence="1">Amino-acid biosynthesis; L-proline biosynthesis; L-glutamate 5-semialdehyde from L-glutamate: step 1/2.</text>
</comment>
<comment type="subcellular location">
    <subcellularLocation>
        <location evidence="1">Cytoplasm</location>
    </subcellularLocation>
</comment>
<comment type="similarity">
    <text evidence="1">Belongs to the glutamate 5-kinase family.</text>
</comment>
<proteinExistence type="inferred from homology"/>
<protein>
    <recommendedName>
        <fullName evidence="1">Glutamate 5-kinase 2</fullName>
        <ecNumber evidence="1">2.7.2.11</ecNumber>
    </recommendedName>
    <alternativeName>
        <fullName evidence="1">Gamma-glutamyl kinase 2</fullName>
        <shortName evidence="1">GK 2</shortName>
    </alternativeName>
</protein>
<evidence type="ECO:0000255" key="1">
    <source>
        <dbReference type="HAMAP-Rule" id="MF_00456"/>
    </source>
</evidence>
<gene>
    <name evidence="1" type="primary">proB2</name>
    <name type="ordered locus">BLi02149</name>
    <name type="ordered locus">BL01983</name>
</gene>
<feature type="chain" id="PRO_0000109639" description="Glutamate 5-kinase 2">
    <location>
        <begin position="1"/>
        <end position="373"/>
    </location>
</feature>
<feature type="domain" description="PUA" evidence="1">
    <location>
        <begin position="279"/>
        <end position="355"/>
    </location>
</feature>
<feature type="binding site" evidence="1">
    <location>
        <position position="11"/>
    </location>
    <ligand>
        <name>ATP</name>
        <dbReference type="ChEBI" id="CHEBI:30616"/>
    </ligand>
</feature>
<feature type="binding site" evidence="1">
    <location>
        <position position="51"/>
    </location>
    <ligand>
        <name>substrate</name>
    </ligand>
</feature>
<feature type="binding site" evidence="1">
    <location>
        <position position="138"/>
    </location>
    <ligand>
        <name>substrate</name>
    </ligand>
</feature>
<feature type="binding site" evidence="1">
    <location>
        <position position="150"/>
    </location>
    <ligand>
        <name>substrate</name>
    </ligand>
</feature>
<feature type="binding site" evidence="1">
    <location>
        <begin position="170"/>
        <end position="171"/>
    </location>
    <ligand>
        <name>ATP</name>
        <dbReference type="ChEBI" id="CHEBI:30616"/>
    </ligand>
</feature>
<feature type="binding site" evidence="1">
    <location>
        <begin position="212"/>
        <end position="218"/>
    </location>
    <ligand>
        <name>ATP</name>
        <dbReference type="ChEBI" id="CHEBI:30616"/>
    </ligand>
</feature>